<name>SMIM7_DANRE</name>
<evidence type="ECO:0000255" key="1"/>
<evidence type="ECO:0000305" key="2"/>
<keyword id="KW-0472">Membrane</keyword>
<keyword id="KW-1185">Reference proteome</keyword>
<keyword id="KW-0732">Signal</keyword>
<keyword id="KW-0812">Transmembrane</keyword>
<keyword id="KW-1133">Transmembrane helix</keyword>
<protein>
    <recommendedName>
        <fullName>Small integral membrane protein 7</fullName>
    </recommendedName>
</protein>
<reference key="1">
    <citation type="submission" date="2007-06" db="EMBL/GenBank/DDBJ databases">
        <authorList>
            <consortium name="NIH - Zebrafish Gene Collection (ZGC) project"/>
        </authorList>
    </citation>
    <scope>NUCLEOTIDE SEQUENCE [LARGE SCALE MRNA]</scope>
    <source>
        <tissue>Eye</tissue>
    </source>
</reference>
<dbReference type="EMBL" id="BC142848">
    <property type="protein sequence ID" value="AAI42849.1"/>
    <property type="molecule type" value="mRNA"/>
</dbReference>
<dbReference type="RefSeq" id="NP_001185672.1">
    <property type="nucleotide sequence ID" value="NM_001198743.1"/>
</dbReference>
<dbReference type="FunCoup" id="A5PLC9">
    <property type="interactions" value="394"/>
</dbReference>
<dbReference type="STRING" id="7955.ENSDARP00000073375"/>
<dbReference type="PaxDb" id="7955-ENSDARP00000073375"/>
<dbReference type="PeptideAtlas" id="A5PLC9"/>
<dbReference type="Ensembl" id="ENSDART00000078916">
    <property type="protein sequence ID" value="ENSDARP00000073375"/>
    <property type="gene ID" value="ENSDARG00000074848"/>
</dbReference>
<dbReference type="GeneID" id="100093704"/>
<dbReference type="KEGG" id="dre:100093704"/>
<dbReference type="AGR" id="ZFIN:ZDB-GENE-060810-180"/>
<dbReference type="CTD" id="79086"/>
<dbReference type="ZFIN" id="ZDB-GENE-060810-180">
    <property type="gene designation" value="smim7"/>
</dbReference>
<dbReference type="eggNOG" id="ENOG502S4E0">
    <property type="taxonomic scope" value="Eukaryota"/>
</dbReference>
<dbReference type="HOGENOM" id="CLU_181165_0_0_1"/>
<dbReference type="InParanoid" id="A5PLC9"/>
<dbReference type="OrthoDB" id="10047572at2759"/>
<dbReference type="PhylomeDB" id="A5PLC9"/>
<dbReference type="TreeFam" id="TF332999"/>
<dbReference type="PRO" id="PR:A5PLC9"/>
<dbReference type="Proteomes" id="UP000000437">
    <property type="component" value="Chromosome 11"/>
</dbReference>
<dbReference type="Bgee" id="ENSDARG00000074848">
    <property type="expression patterns" value="Expressed in mature ovarian follicle and 23 other cell types or tissues"/>
</dbReference>
<dbReference type="ExpressionAtlas" id="A5PLC9">
    <property type="expression patterns" value="baseline and differential"/>
</dbReference>
<dbReference type="GO" id="GO:0016020">
    <property type="term" value="C:membrane"/>
    <property type="evidence" value="ECO:0007669"/>
    <property type="project" value="UniProtKB-SubCell"/>
</dbReference>
<dbReference type="InterPro" id="IPR037659">
    <property type="entry name" value="SMIM7"/>
</dbReference>
<dbReference type="PANTHER" id="PTHR28622">
    <property type="entry name" value="SMALL INTEGRAL MEMBRANE PROTEIN 7"/>
    <property type="match status" value="1"/>
</dbReference>
<dbReference type="PANTHER" id="PTHR28622:SF1">
    <property type="entry name" value="SMALL INTEGRAL MEMBRANE PROTEIN 7"/>
    <property type="match status" value="1"/>
</dbReference>
<comment type="subcellular location">
    <subcellularLocation>
        <location evidence="2">Membrane</location>
        <topology evidence="2">Single-pass type I membrane protein</topology>
    </subcellularLocation>
</comment>
<comment type="similarity">
    <text evidence="2">Belongs to the SMIM7 family.</text>
</comment>
<organism>
    <name type="scientific">Danio rerio</name>
    <name type="common">Zebrafish</name>
    <name type="synonym">Brachydanio rerio</name>
    <dbReference type="NCBI Taxonomy" id="7955"/>
    <lineage>
        <taxon>Eukaryota</taxon>
        <taxon>Metazoa</taxon>
        <taxon>Chordata</taxon>
        <taxon>Craniata</taxon>
        <taxon>Vertebrata</taxon>
        <taxon>Euteleostomi</taxon>
        <taxon>Actinopterygii</taxon>
        <taxon>Neopterygii</taxon>
        <taxon>Teleostei</taxon>
        <taxon>Ostariophysi</taxon>
        <taxon>Cypriniformes</taxon>
        <taxon>Danionidae</taxon>
        <taxon>Danioninae</taxon>
        <taxon>Danio</taxon>
    </lineage>
</organism>
<gene>
    <name type="primary">smim7</name>
    <name type="ORF">zgc:165531</name>
</gene>
<proteinExistence type="inferred from homology"/>
<accession>A5PLC9</accession>
<sequence length="77" mass="8723">MIGDLLIFGTLLMNAGAVLNFKLKKRETQSQGFGDDSGSSSTGENIREFLLSLRYFRIFIALWNIFMMFCMIVLFGS</sequence>
<feature type="signal peptide" evidence="1">
    <location>
        <begin position="1"/>
        <end position="17"/>
    </location>
</feature>
<feature type="chain" id="PRO_0000342616" description="Small integral membrane protein 7">
    <location>
        <begin position="18"/>
        <end position="77"/>
    </location>
</feature>
<feature type="topological domain" description="Extracellular" evidence="1">
    <location>
        <begin position="18"/>
        <end position="55"/>
    </location>
</feature>
<feature type="transmembrane region" description="Helical" evidence="1">
    <location>
        <begin position="56"/>
        <end position="76"/>
    </location>
</feature>
<feature type="topological domain" description="Cytoplasmic" evidence="1">
    <location>
        <position position="77"/>
    </location>
</feature>